<evidence type="ECO:0000250" key="1">
    <source>
        <dbReference type="UniProtKB" id="Q3E792"/>
    </source>
</evidence>
<evidence type="ECO:0000269" key="2">
    <source>
    </source>
</evidence>
<evidence type="ECO:0000305" key="3"/>
<proteinExistence type="evidence at protein level"/>
<keyword id="KW-0002">3D-structure</keyword>
<keyword id="KW-0963">Cytoplasm</keyword>
<keyword id="KW-1185">Reference proteome</keyword>
<keyword id="KW-0687">Ribonucleoprotein</keyword>
<keyword id="KW-0689">Ribosomal protein</keyword>
<reference key="1">
    <citation type="journal article" date="2002" name="Nature">
        <title>The genome sequence of Schizosaccharomyces pombe.</title>
        <authorList>
            <person name="Wood V."/>
            <person name="Gwilliam R."/>
            <person name="Rajandream M.A."/>
            <person name="Lyne M.H."/>
            <person name="Lyne R."/>
            <person name="Stewart A."/>
            <person name="Sgouros J.G."/>
            <person name="Peat N."/>
            <person name="Hayles J."/>
            <person name="Baker S.G."/>
            <person name="Basham D."/>
            <person name="Bowman S."/>
            <person name="Brooks K."/>
            <person name="Brown D."/>
            <person name="Brown S."/>
            <person name="Chillingworth T."/>
            <person name="Churcher C.M."/>
            <person name="Collins M."/>
            <person name="Connor R."/>
            <person name="Cronin A."/>
            <person name="Davis P."/>
            <person name="Feltwell T."/>
            <person name="Fraser A."/>
            <person name="Gentles S."/>
            <person name="Goble A."/>
            <person name="Hamlin N."/>
            <person name="Harris D.E."/>
            <person name="Hidalgo J."/>
            <person name="Hodgson G."/>
            <person name="Holroyd S."/>
            <person name="Hornsby T."/>
            <person name="Howarth S."/>
            <person name="Huckle E.J."/>
            <person name="Hunt S."/>
            <person name="Jagels K."/>
            <person name="James K.D."/>
            <person name="Jones L."/>
            <person name="Jones M."/>
            <person name="Leather S."/>
            <person name="McDonald S."/>
            <person name="McLean J."/>
            <person name="Mooney P."/>
            <person name="Moule S."/>
            <person name="Mungall K.L."/>
            <person name="Murphy L.D."/>
            <person name="Niblett D."/>
            <person name="Odell C."/>
            <person name="Oliver K."/>
            <person name="O'Neil S."/>
            <person name="Pearson D."/>
            <person name="Quail M.A."/>
            <person name="Rabbinowitsch E."/>
            <person name="Rutherford K.M."/>
            <person name="Rutter S."/>
            <person name="Saunders D."/>
            <person name="Seeger K."/>
            <person name="Sharp S."/>
            <person name="Skelton J."/>
            <person name="Simmonds M.N."/>
            <person name="Squares R."/>
            <person name="Squares S."/>
            <person name="Stevens K."/>
            <person name="Taylor K."/>
            <person name="Taylor R.G."/>
            <person name="Tivey A."/>
            <person name="Walsh S.V."/>
            <person name="Warren T."/>
            <person name="Whitehead S."/>
            <person name="Woodward J.R."/>
            <person name="Volckaert G."/>
            <person name="Aert R."/>
            <person name="Robben J."/>
            <person name="Grymonprez B."/>
            <person name="Weltjens I."/>
            <person name="Vanstreels E."/>
            <person name="Rieger M."/>
            <person name="Schaefer M."/>
            <person name="Mueller-Auer S."/>
            <person name="Gabel C."/>
            <person name="Fuchs M."/>
            <person name="Duesterhoeft A."/>
            <person name="Fritzc C."/>
            <person name="Holzer E."/>
            <person name="Moestl D."/>
            <person name="Hilbert H."/>
            <person name="Borzym K."/>
            <person name="Langer I."/>
            <person name="Beck A."/>
            <person name="Lehrach H."/>
            <person name="Reinhardt R."/>
            <person name="Pohl T.M."/>
            <person name="Eger P."/>
            <person name="Zimmermann W."/>
            <person name="Wedler H."/>
            <person name="Wambutt R."/>
            <person name="Purnelle B."/>
            <person name="Goffeau A."/>
            <person name="Cadieu E."/>
            <person name="Dreano S."/>
            <person name="Gloux S."/>
            <person name="Lelaure V."/>
            <person name="Mottier S."/>
            <person name="Galibert F."/>
            <person name="Aves S.J."/>
            <person name="Xiang Z."/>
            <person name="Hunt C."/>
            <person name="Moore K."/>
            <person name="Hurst S.M."/>
            <person name="Lucas M."/>
            <person name="Rochet M."/>
            <person name="Gaillardin C."/>
            <person name="Tallada V.A."/>
            <person name="Garzon A."/>
            <person name="Thode G."/>
            <person name="Daga R.R."/>
            <person name="Cruzado L."/>
            <person name="Jimenez J."/>
            <person name="Sanchez M."/>
            <person name="del Rey F."/>
            <person name="Benito J."/>
            <person name="Dominguez A."/>
            <person name="Revuelta J.L."/>
            <person name="Moreno S."/>
            <person name="Armstrong J."/>
            <person name="Forsburg S.L."/>
            <person name="Cerutti L."/>
            <person name="Lowe T."/>
            <person name="McCombie W.R."/>
            <person name="Paulsen I."/>
            <person name="Potashkin J."/>
            <person name="Shpakovski G.V."/>
            <person name="Ussery D."/>
            <person name="Barrell B.G."/>
            <person name="Nurse P."/>
        </authorList>
    </citation>
    <scope>NUCLEOTIDE SEQUENCE [LARGE SCALE GENOMIC DNA]</scope>
    <source>
        <strain>972 / ATCC 24843</strain>
    </source>
</reference>
<reference key="2">
    <citation type="submission" date="1997-01" db="EMBL/GenBank/DDBJ databases">
        <title>S.pombe ribosomal protein S31 homolog.</title>
        <authorList>
            <person name="Kawamukai M."/>
        </authorList>
    </citation>
    <scope>NUCLEOTIDE SEQUENCE [MRNA] OF 4-89</scope>
</reference>
<reference key="3">
    <citation type="journal article" date="2006" name="Nat. Biotechnol.">
        <title>ORFeome cloning and global analysis of protein localization in the fission yeast Schizosaccharomyces pombe.</title>
        <authorList>
            <person name="Matsuyama A."/>
            <person name="Arai R."/>
            <person name="Yashiroda Y."/>
            <person name="Shirai A."/>
            <person name="Kamata A."/>
            <person name="Sekido S."/>
            <person name="Kobayashi Y."/>
            <person name="Hashimoto A."/>
            <person name="Hamamoto M."/>
            <person name="Hiraoka Y."/>
            <person name="Horinouchi S."/>
            <person name="Yoshida M."/>
        </authorList>
    </citation>
    <scope>SUBCELLULAR LOCATION [LARGE SCALE ANALYSIS]</scope>
</reference>
<accession>P79009</accession>
<accession>Q9P7T5</accession>
<organism>
    <name type="scientific">Schizosaccharomyces pombe (strain 972 / ATCC 24843)</name>
    <name type="common">Fission yeast</name>
    <dbReference type="NCBI Taxonomy" id="284812"/>
    <lineage>
        <taxon>Eukaryota</taxon>
        <taxon>Fungi</taxon>
        <taxon>Dikarya</taxon>
        <taxon>Ascomycota</taxon>
        <taxon>Taphrinomycotina</taxon>
        <taxon>Schizosaccharomycetes</taxon>
        <taxon>Schizosaccharomycetales</taxon>
        <taxon>Schizosaccharomycetaceae</taxon>
        <taxon>Schizosaccharomyces</taxon>
    </lineage>
</organism>
<comment type="function">
    <text evidence="1">Component of the ribosome, a large ribonucleoprotein complex responsible for the synthesis of proteins in the cell. The small ribosomal subunit (SSU) binds messenger RNAs (mRNAs) and translates the encoded message by selecting cognate aminoacyl-transfer RNA (tRNA) molecules. The large subunit (LSU) contains the ribosomal catalytic site termed the peptidyl transferase center (PTC), which catalyzes the formation of peptide bonds, thereby polymerizing the amino acids delivered by tRNAs into a polypeptide chain. The nascent polypeptides leave the ribosome through a tunnel in the LSU and interact with protein factors that function in enzymatic processing, targeting, and the membrane insertion of nascent chains at the exit of the ribosomal tunnel.</text>
</comment>
<comment type="subunit">
    <text evidence="1">Component of the small ribosomal subunit (SSU). Mature yeast ribosomes consist of a small (40S) and a large (60S) subunit. The 40S small subunit contains 1 molecule of ribosomal RNA (18S rRNA) and at least 33 different proteins. The large 60S subunit contains 3 rRNA molecules (25S, 5.8S and 5S rRNA) and at least 46 different proteins.</text>
</comment>
<comment type="subcellular location">
    <subcellularLocation>
        <location evidence="2">Cytoplasm</location>
    </subcellularLocation>
</comment>
<comment type="miscellaneous">
    <text>There are 2 genes for eS25 in S.pombe.</text>
</comment>
<comment type="similarity">
    <text evidence="3">Belongs to the eukaryotic ribosomal protein eS25 family.</text>
</comment>
<sequence>MAPKKKWSKGKVKDKAQHATVFDKSIIDRINKEVPAFKFISVSVLVDRMKINGSLARIAIRDLAERGVIQKVDQHSKQAIYTRVPAATA</sequence>
<gene>
    <name type="primary">rps2502</name>
    <name type="synonym">rps25</name>
    <name type="synonym">rps25a</name>
    <name type="ORF">SPAC694.05c</name>
</gene>
<dbReference type="EMBL" id="CU329670">
    <property type="protein sequence ID" value="CAB71843.1"/>
    <property type="molecule type" value="Genomic_DNA"/>
</dbReference>
<dbReference type="EMBL" id="AB000398">
    <property type="protein sequence ID" value="BAA19096.1"/>
    <property type="molecule type" value="mRNA"/>
</dbReference>
<dbReference type="PIR" id="T50250">
    <property type="entry name" value="T50250"/>
</dbReference>
<dbReference type="RefSeq" id="NP_594485.1">
    <property type="nucleotide sequence ID" value="NM_001019914.2"/>
</dbReference>
<dbReference type="PDB" id="9AXT">
    <property type="method" value="EM"/>
    <property type="resolution" value="2.40 A"/>
    <property type="chains" value="Af=1-89"/>
</dbReference>
<dbReference type="PDB" id="9AXV">
    <property type="method" value="EM"/>
    <property type="resolution" value="2.40 A"/>
    <property type="chains" value="Af=1-89"/>
</dbReference>
<dbReference type="PDBsum" id="9AXT"/>
<dbReference type="PDBsum" id="9AXV"/>
<dbReference type="EMDB" id="EMD-43972"/>
<dbReference type="EMDB" id="EMD-43976"/>
<dbReference type="SMR" id="P79009"/>
<dbReference type="BioGRID" id="279731">
    <property type="interactions" value="25"/>
</dbReference>
<dbReference type="FunCoup" id="P79009">
    <property type="interactions" value="516"/>
</dbReference>
<dbReference type="IntAct" id="P79009">
    <property type="interactions" value="1"/>
</dbReference>
<dbReference type="STRING" id="284812.P79009"/>
<dbReference type="iPTMnet" id="P79009"/>
<dbReference type="PaxDb" id="4896-SPAC694.05c.1"/>
<dbReference type="EnsemblFungi" id="SPAC694.05c.1">
    <property type="protein sequence ID" value="SPAC694.05c.1:pep"/>
    <property type="gene ID" value="SPAC694.05c"/>
</dbReference>
<dbReference type="GeneID" id="2543307"/>
<dbReference type="KEGG" id="spo:2543307"/>
<dbReference type="PomBase" id="SPAC694.05c">
    <property type="gene designation" value="rps2502"/>
</dbReference>
<dbReference type="VEuPathDB" id="FungiDB:SPAC694.05c"/>
<dbReference type="eggNOG" id="KOG1767">
    <property type="taxonomic scope" value="Eukaryota"/>
</dbReference>
<dbReference type="HOGENOM" id="CLU_129470_4_0_1"/>
<dbReference type="InParanoid" id="P79009"/>
<dbReference type="OMA" id="CASAYEM"/>
<dbReference type="PhylomeDB" id="P79009"/>
<dbReference type="Reactome" id="R-SPO-156827">
    <property type="pathway name" value="L13a-mediated translational silencing of Ceruloplasmin expression"/>
</dbReference>
<dbReference type="Reactome" id="R-SPO-1799339">
    <property type="pathway name" value="SRP-dependent cotranslational protein targeting to membrane"/>
</dbReference>
<dbReference type="Reactome" id="R-SPO-72649">
    <property type="pathway name" value="Translation initiation complex formation"/>
</dbReference>
<dbReference type="Reactome" id="R-SPO-72689">
    <property type="pathway name" value="Formation of a pool of free 40S subunits"/>
</dbReference>
<dbReference type="Reactome" id="R-SPO-72695">
    <property type="pathway name" value="Formation of the ternary complex, and subsequently, the 43S complex"/>
</dbReference>
<dbReference type="Reactome" id="R-SPO-72702">
    <property type="pathway name" value="Ribosomal scanning and start codon recognition"/>
</dbReference>
<dbReference type="Reactome" id="R-SPO-72706">
    <property type="pathway name" value="GTP hydrolysis and joining of the 60S ribosomal subunit"/>
</dbReference>
<dbReference type="Reactome" id="R-SPO-975956">
    <property type="pathway name" value="Nonsense Mediated Decay (NMD) independent of the Exon Junction Complex (EJC)"/>
</dbReference>
<dbReference type="Reactome" id="R-SPO-975957">
    <property type="pathway name" value="Nonsense Mediated Decay (NMD) enhanced by the Exon Junction Complex (EJC)"/>
</dbReference>
<dbReference type="PRO" id="PR:P79009"/>
<dbReference type="Proteomes" id="UP000002485">
    <property type="component" value="Chromosome I"/>
</dbReference>
<dbReference type="GO" id="GO:0005829">
    <property type="term" value="C:cytosol"/>
    <property type="evidence" value="ECO:0007005"/>
    <property type="project" value="PomBase"/>
</dbReference>
<dbReference type="GO" id="GO:0022627">
    <property type="term" value="C:cytosolic small ribosomal subunit"/>
    <property type="evidence" value="ECO:0000269"/>
    <property type="project" value="PomBase"/>
</dbReference>
<dbReference type="GO" id="GO:0003735">
    <property type="term" value="F:structural constituent of ribosome"/>
    <property type="evidence" value="ECO:0000318"/>
    <property type="project" value="GO_Central"/>
</dbReference>
<dbReference type="GO" id="GO:0002181">
    <property type="term" value="P:cytoplasmic translation"/>
    <property type="evidence" value="ECO:0000266"/>
    <property type="project" value="PomBase"/>
</dbReference>
<dbReference type="FunFam" id="3.30.63.20:FF:000001">
    <property type="entry name" value="40S ribosomal protein S25"/>
    <property type="match status" value="1"/>
</dbReference>
<dbReference type="Gene3D" id="3.30.63.20">
    <property type="match status" value="1"/>
</dbReference>
<dbReference type="InterPro" id="IPR004977">
    <property type="entry name" value="Ribosomal_eS25"/>
</dbReference>
<dbReference type="PANTHER" id="PTHR12850">
    <property type="entry name" value="40S RIBOSOMAL PROTEIN S25"/>
    <property type="match status" value="1"/>
</dbReference>
<dbReference type="Pfam" id="PF03297">
    <property type="entry name" value="Ribosomal_S25"/>
    <property type="match status" value="1"/>
</dbReference>
<protein>
    <recommendedName>
        <fullName evidence="3">Small ribosomal subunit protein eS25A</fullName>
    </recommendedName>
    <alternativeName>
        <fullName>40S ribosomal protein S25-A</fullName>
    </alternativeName>
    <alternativeName>
        <fullName>S31-A</fullName>
    </alternativeName>
</protein>
<feature type="chain" id="PRO_0000192889" description="Small ribosomal subunit protein eS25A">
    <location>
        <begin position="1"/>
        <end position="89"/>
    </location>
</feature>
<feature type="sequence conflict" description="In Ref. 2; BAA19096." evidence="3" ref="2">
    <original>KKK</original>
    <variation>RHE</variation>
    <location>
        <begin position="4"/>
        <end position="6"/>
    </location>
</feature>
<name>RS25A_SCHPO</name>